<evidence type="ECO:0000250" key="1"/>
<evidence type="ECO:0000255" key="2">
    <source>
        <dbReference type="PROSITE-ProRule" id="PRU10001"/>
    </source>
</evidence>
<evidence type="ECO:0000305" key="3"/>
<sequence>MVFXLPNKNVIFVAGLGGIGLDTSREIVKAGPKNLVILDRVENPAAIAELQAINPKVTVTFYPYDVTVPLSESVKLLKTIFDKLKTIDLLINGAGILDDHQIERTIAVNFTGLVNTTTAILQFWDKRKGGPGGVIANICSVTGFNAIYQVPVYSASKAAVVSFTQSIAKLAPITGVTAYSINPGITKTTLVHKFNSWLDVEPRVAELLDEHPTQSTTACAQNFVKAIELNQNGAIWKLDVGRLDPVQWTKHWDSGI</sequence>
<name>ADH_ZAPTU</name>
<dbReference type="EC" id="1.1.1.1"/>
<dbReference type="EMBL" id="X63955">
    <property type="protein sequence ID" value="CAA45376.1"/>
    <property type="molecule type" value="Genomic_DNA"/>
</dbReference>
<dbReference type="GO" id="GO:0005737">
    <property type="term" value="C:cytoplasm"/>
    <property type="evidence" value="ECO:0007669"/>
    <property type="project" value="TreeGrafter"/>
</dbReference>
<dbReference type="GO" id="GO:0004022">
    <property type="term" value="F:alcohol dehydrogenase (NAD+) activity"/>
    <property type="evidence" value="ECO:0007669"/>
    <property type="project" value="UniProtKB-EC"/>
</dbReference>
<dbReference type="GO" id="GO:0006066">
    <property type="term" value="P:alcohol metabolic process"/>
    <property type="evidence" value="ECO:0007669"/>
    <property type="project" value="InterPro"/>
</dbReference>
<dbReference type="CDD" id="cd05323">
    <property type="entry name" value="ADH_SDR_c_like"/>
    <property type="match status" value="1"/>
</dbReference>
<dbReference type="FunFam" id="3.40.50.720:FF:000302">
    <property type="entry name" value="Alcohol dehydrogenase"/>
    <property type="match status" value="1"/>
</dbReference>
<dbReference type="Gene3D" id="3.40.50.720">
    <property type="entry name" value="NAD(P)-binding Rossmann-like Domain"/>
    <property type="match status" value="1"/>
</dbReference>
<dbReference type="InterPro" id="IPR002425">
    <property type="entry name" value="ADH_Drosophila-type"/>
</dbReference>
<dbReference type="InterPro" id="IPR036291">
    <property type="entry name" value="NAD(P)-bd_dom_sf"/>
</dbReference>
<dbReference type="InterPro" id="IPR020904">
    <property type="entry name" value="Sc_DH/Rdtase_CS"/>
</dbReference>
<dbReference type="InterPro" id="IPR002347">
    <property type="entry name" value="SDR_fam"/>
</dbReference>
<dbReference type="PANTHER" id="PTHR44229">
    <property type="entry name" value="15-HYDROXYPROSTAGLANDIN DEHYDROGENASE [NAD(+)]"/>
    <property type="match status" value="1"/>
</dbReference>
<dbReference type="PANTHER" id="PTHR44229:SF8">
    <property type="entry name" value="ALCOHOL DEHYDROGENASE-RELATED"/>
    <property type="match status" value="1"/>
</dbReference>
<dbReference type="Pfam" id="PF00106">
    <property type="entry name" value="adh_short"/>
    <property type="match status" value="1"/>
</dbReference>
<dbReference type="PRINTS" id="PR01168">
    <property type="entry name" value="ALCDHDRGNASE"/>
</dbReference>
<dbReference type="PRINTS" id="PR01167">
    <property type="entry name" value="INSADHFAMILY"/>
</dbReference>
<dbReference type="PRINTS" id="PR00080">
    <property type="entry name" value="SDRFAMILY"/>
</dbReference>
<dbReference type="SUPFAM" id="SSF51735">
    <property type="entry name" value="NAD(P)-binding Rossmann-fold domains"/>
    <property type="match status" value="1"/>
</dbReference>
<dbReference type="PROSITE" id="PS00061">
    <property type="entry name" value="ADH_SHORT"/>
    <property type="match status" value="1"/>
</dbReference>
<proteinExistence type="inferred from homology"/>
<comment type="catalytic activity">
    <reaction evidence="2">
        <text>a primary alcohol + NAD(+) = an aldehyde + NADH + H(+)</text>
        <dbReference type="Rhea" id="RHEA:10736"/>
        <dbReference type="ChEBI" id="CHEBI:15378"/>
        <dbReference type="ChEBI" id="CHEBI:15734"/>
        <dbReference type="ChEBI" id="CHEBI:17478"/>
        <dbReference type="ChEBI" id="CHEBI:57540"/>
        <dbReference type="ChEBI" id="CHEBI:57945"/>
        <dbReference type="EC" id="1.1.1.1"/>
    </reaction>
</comment>
<comment type="catalytic activity">
    <reaction evidence="2">
        <text>a secondary alcohol + NAD(+) = a ketone + NADH + H(+)</text>
        <dbReference type="Rhea" id="RHEA:10740"/>
        <dbReference type="ChEBI" id="CHEBI:15378"/>
        <dbReference type="ChEBI" id="CHEBI:17087"/>
        <dbReference type="ChEBI" id="CHEBI:35681"/>
        <dbReference type="ChEBI" id="CHEBI:57540"/>
        <dbReference type="ChEBI" id="CHEBI:57945"/>
        <dbReference type="EC" id="1.1.1.1"/>
    </reaction>
</comment>
<comment type="subunit">
    <text>Homodimer.</text>
</comment>
<comment type="similarity">
    <text evidence="3">Belongs to the short-chain dehydrogenases/reductases (SDR) family.</text>
</comment>
<accession>P51552</accession>
<protein>
    <recommendedName>
        <fullName>Alcohol dehydrogenase</fullName>
        <ecNumber>1.1.1.1</ecNumber>
    </recommendedName>
</protein>
<gene>
    <name type="primary">Adh</name>
</gene>
<organism>
    <name type="scientific">Zaprionus tuberculatus</name>
    <name type="common">Vinegar fly</name>
    <dbReference type="NCBI Taxonomy" id="7297"/>
    <lineage>
        <taxon>Eukaryota</taxon>
        <taxon>Metazoa</taxon>
        <taxon>Ecdysozoa</taxon>
        <taxon>Arthropoda</taxon>
        <taxon>Hexapoda</taxon>
        <taxon>Insecta</taxon>
        <taxon>Pterygota</taxon>
        <taxon>Neoptera</taxon>
        <taxon>Endopterygota</taxon>
        <taxon>Diptera</taxon>
        <taxon>Brachycera</taxon>
        <taxon>Muscomorpha</taxon>
        <taxon>Ephydroidea</taxon>
        <taxon>Drosophilidae</taxon>
        <taxon>Zaprionus</taxon>
        <taxon>armatus group</taxon>
        <taxon>tuberculatus subgroup</taxon>
    </lineage>
</organism>
<keyword id="KW-0520">NAD</keyword>
<keyword id="KW-0560">Oxidoreductase</keyword>
<feature type="chain" id="PRO_0000054516" description="Alcohol dehydrogenase">
    <location>
        <begin position="1"/>
        <end position="256"/>
    </location>
</feature>
<feature type="active site" description="Proton acceptor" evidence="2">
    <location>
        <position position="153"/>
    </location>
</feature>
<feature type="binding site" evidence="1">
    <location>
        <begin position="12"/>
        <end position="35"/>
    </location>
    <ligand>
        <name>NAD(+)</name>
        <dbReference type="ChEBI" id="CHEBI:57540"/>
    </ligand>
</feature>
<feature type="binding site" evidence="1">
    <location>
        <position position="140"/>
    </location>
    <ligand>
        <name>substrate</name>
    </ligand>
</feature>
<reference key="1">
    <citation type="journal article" date="1991" name="J. Mol. Evol.">
        <title>Evidence for interspecific transfer of the transposable element mariner between Drosophila and Zaprionus.</title>
        <authorList>
            <person name="Maruyama K."/>
            <person name="Hartl D.L."/>
        </authorList>
    </citation>
    <scope>NUCLEOTIDE SEQUENCE [GENOMIC DNA]</scope>
</reference>